<reference key="1">
    <citation type="journal article" date="2001" name="Nature">
        <title>Genome sequence of enterohaemorrhagic Escherichia coli O157:H7.</title>
        <authorList>
            <person name="Perna N.T."/>
            <person name="Plunkett G. III"/>
            <person name="Burland V."/>
            <person name="Mau B."/>
            <person name="Glasner J.D."/>
            <person name="Rose D.J."/>
            <person name="Mayhew G.F."/>
            <person name="Evans P.S."/>
            <person name="Gregor J."/>
            <person name="Kirkpatrick H.A."/>
            <person name="Posfai G."/>
            <person name="Hackett J."/>
            <person name="Klink S."/>
            <person name="Boutin A."/>
            <person name="Shao Y."/>
            <person name="Miller L."/>
            <person name="Grotbeck E.J."/>
            <person name="Davis N.W."/>
            <person name="Lim A."/>
            <person name="Dimalanta E.T."/>
            <person name="Potamousis K."/>
            <person name="Apodaca J."/>
            <person name="Anantharaman T.S."/>
            <person name="Lin J."/>
            <person name="Yen G."/>
            <person name="Schwartz D.C."/>
            <person name="Welch R.A."/>
            <person name="Blattner F.R."/>
        </authorList>
    </citation>
    <scope>NUCLEOTIDE SEQUENCE [LARGE SCALE GENOMIC DNA]</scope>
    <source>
        <strain>O157:H7 / EDL933 / ATCC 700927 / EHEC</strain>
    </source>
</reference>
<reference key="2">
    <citation type="journal article" date="2001" name="DNA Res.">
        <title>Complete genome sequence of enterohemorrhagic Escherichia coli O157:H7 and genomic comparison with a laboratory strain K-12.</title>
        <authorList>
            <person name="Hayashi T."/>
            <person name="Makino K."/>
            <person name="Ohnishi M."/>
            <person name="Kurokawa K."/>
            <person name="Ishii K."/>
            <person name="Yokoyama K."/>
            <person name="Han C.-G."/>
            <person name="Ohtsubo E."/>
            <person name="Nakayama K."/>
            <person name="Murata T."/>
            <person name="Tanaka M."/>
            <person name="Tobe T."/>
            <person name="Iida T."/>
            <person name="Takami H."/>
            <person name="Honda T."/>
            <person name="Sasakawa C."/>
            <person name="Ogasawara N."/>
            <person name="Yasunaga T."/>
            <person name="Kuhara S."/>
            <person name="Shiba T."/>
            <person name="Hattori M."/>
            <person name="Shinagawa H."/>
        </authorList>
    </citation>
    <scope>NUCLEOTIDE SEQUENCE [LARGE SCALE GENOMIC DNA]</scope>
    <source>
        <strain>O157:H7 / Sakai / RIMD 0509952 / EHEC</strain>
    </source>
</reference>
<accession>P0A9S8</accession>
<accession>P22730</accession>
<feature type="chain" id="PRO_0000092407" description="High-affinity branched-chain amino acid transport ATP-binding protein LivG">
    <location>
        <begin position="1"/>
        <end position="255"/>
    </location>
</feature>
<feature type="domain" description="ABC transporter" evidence="2">
    <location>
        <begin position="6"/>
        <end position="254"/>
    </location>
</feature>
<feature type="binding site" evidence="2">
    <location>
        <begin position="38"/>
        <end position="45"/>
    </location>
    <ligand>
        <name>ATP</name>
        <dbReference type="ChEBI" id="CHEBI:30616"/>
    </ligand>
</feature>
<keyword id="KW-0029">Amino-acid transport</keyword>
<keyword id="KW-0067">ATP-binding</keyword>
<keyword id="KW-0547">Nucleotide-binding</keyword>
<keyword id="KW-1185">Reference proteome</keyword>
<keyword id="KW-0813">Transport</keyword>
<evidence type="ECO:0000250" key="1"/>
<evidence type="ECO:0000255" key="2">
    <source>
        <dbReference type="PROSITE-ProRule" id="PRU00434"/>
    </source>
</evidence>
<evidence type="ECO:0000305" key="3"/>
<dbReference type="EMBL" id="AE005174">
    <property type="protein sequence ID" value="AAG58562.1"/>
    <property type="molecule type" value="Genomic_DNA"/>
</dbReference>
<dbReference type="EMBL" id="BA000007">
    <property type="protein sequence ID" value="BAB37725.1"/>
    <property type="molecule type" value="Genomic_DNA"/>
</dbReference>
<dbReference type="PIR" id="F86012">
    <property type="entry name" value="F86012"/>
</dbReference>
<dbReference type="PIR" id="F91166">
    <property type="entry name" value="F91166"/>
</dbReference>
<dbReference type="RefSeq" id="NP_312329.1">
    <property type="nucleotide sequence ID" value="NC_002695.1"/>
</dbReference>
<dbReference type="RefSeq" id="WP_000082101.1">
    <property type="nucleotide sequence ID" value="NZ_SWKA01000005.1"/>
</dbReference>
<dbReference type="SMR" id="P0A9S8"/>
<dbReference type="STRING" id="155864.Z4825"/>
<dbReference type="GeneID" id="89518287"/>
<dbReference type="GeneID" id="915843"/>
<dbReference type="KEGG" id="ece:Z4825"/>
<dbReference type="KEGG" id="ecs:ECs_4302"/>
<dbReference type="PATRIC" id="fig|386585.9.peg.4494"/>
<dbReference type="eggNOG" id="COG0411">
    <property type="taxonomic scope" value="Bacteria"/>
</dbReference>
<dbReference type="HOGENOM" id="CLU_000604_1_2_6"/>
<dbReference type="OMA" id="EHDMRFI"/>
<dbReference type="Proteomes" id="UP000000558">
    <property type="component" value="Chromosome"/>
</dbReference>
<dbReference type="Proteomes" id="UP000002519">
    <property type="component" value="Chromosome"/>
</dbReference>
<dbReference type="GO" id="GO:0005886">
    <property type="term" value="C:plasma membrane"/>
    <property type="evidence" value="ECO:0007669"/>
    <property type="project" value="TreeGrafter"/>
</dbReference>
<dbReference type="GO" id="GO:0005524">
    <property type="term" value="F:ATP binding"/>
    <property type="evidence" value="ECO:0007669"/>
    <property type="project" value="UniProtKB-KW"/>
</dbReference>
<dbReference type="GO" id="GO:0016887">
    <property type="term" value="F:ATP hydrolysis activity"/>
    <property type="evidence" value="ECO:0007669"/>
    <property type="project" value="InterPro"/>
</dbReference>
<dbReference type="GO" id="GO:0015188">
    <property type="term" value="F:L-isoleucine transmembrane transporter activity"/>
    <property type="evidence" value="ECO:0007669"/>
    <property type="project" value="TreeGrafter"/>
</dbReference>
<dbReference type="GO" id="GO:0015192">
    <property type="term" value="F:L-phenylalanine transmembrane transporter activity"/>
    <property type="evidence" value="ECO:0007669"/>
    <property type="project" value="TreeGrafter"/>
</dbReference>
<dbReference type="GO" id="GO:0005304">
    <property type="term" value="F:L-valine transmembrane transporter activity"/>
    <property type="evidence" value="ECO:0007669"/>
    <property type="project" value="TreeGrafter"/>
</dbReference>
<dbReference type="GO" id="GO:0042941">
    <property type="term" value="P:D-alanine transmembrane transport"/>
    <property type="evidence" value="ECO:0007669"/>
    <property type="project" value="TreeGrafter"/>
</dbReference>
<dbReference type="GO" id="GO:0015808">
    <property type="term" value="P:L-alanine transport"/>
    <property type="evidence" value="ECO:0007669"/>
    <property type="project" value="TreeGrafter"/>
</dbReference>
<dbReference type="GO" id="GO:1903806">
    <property type="term" value="P:L-isoleucine import across plasma membrane"/>
    <property type="evidence" value="ECO:0007669"/>
    <property type="project" value="TreeGrafter"/>
</dbReference>
<dbReference type="GO" id="GO:1903805">
    <property type="term" value="P:L-valine import across plasma membrane"/>
    <property type="evidence" value="ECO:0007669"/>
    <property type="project" value="TreeGrafter"/>
</dbReference>
<dbReference type="CDD" id="cd03219">
    <property type="entry name" value="ABC_Mj1267_LivG_branched"/>
    <property type="match status" value="1"/>
</dbReference>
<dbReference type="FunFam" id="3.40.50.300:FF:000317">
    <property type="entry name" value="Amino acid ABC transporter ATP-binding protein"/>
    <property type="match status" value="1"/>
</dbReference>
<dbReference type="Gene3D" id="3.40.50.300">
    <property type="entry name" value="P-loop containing nucleotide triphosphate hydrolases"/>
    <property type="match status" value="1"/>
</dbReference>
<dbReference type="InterPro" id="IPR003593">
    <property type="entry name" value="AAA+_ATPase"/>
</dbReference>
<dbReference type="InterPro" id="IPR051120">
    <property type="entry name" value="ABC_AA/LPS_Transport"/>
</dbReference>
<dbReference type="InterPro" id="IPR003439">
    <property type="entry name" value="ABC_transporter-like_ATP-bd"/>
</dbReference>
<dbReference type="InterPro" id="IPR017871">
    <property type="entry name" value="ABC_transporter-like_CS"/>
</dbReference>
<dbReference type="InterPro" id="IPR032823">
    <property type="entry name" value="BCA_ABC_TP_C"/>
</dbReference>
<dbReference type="InterPro" id="IPR027417">
    <property type="entry name" value="P-loop_NTPase"/>
</dbReference>
<dbReference type="NCBIfam" id="NF008449">
    <property type="entry name" value="PRK11300.1"/>
    <property type="match status" value="1"/>
</dbReference>
<dbReference type="PANTHER" id="PTHR45772">
    <property type="entry name" value="CONSERVED COMPONENT OF ABC TRANSPORTER FOR NATURAL AMINO ACIDS-RELATED"/>
    <property type="match status" value="1"/>
</dbReference>
<dbReference type="PANTHER" id="PTHR45772:SF11">
    <property type="entry name" value="HIGH-AFFINITY BRANCHED-CHAIN AMINO ACID TRANSPORT ATP-BINDING PROTEIN LIVG"/>
    <property type="match status" value="1"/>
</dbReference>
<dbReference type="Pfam" id="PF00005">
    <property type="entry name" value="ABC_tran"/>
    <property type="match status" value="1"/>
</dbReference>
<dbReference type="Pfam" id="PF12399">
    <property type="entry name" value="BCA_ABC_TP_C"/>
    <property type="match status" value="1"/>
</dbReference>
<dbReference type="SMART" id="SM00382">
    <property type="entry name" value="AAA"/>
    <property type="match status" value="1"/>
</dbReference>
<dbReference type="SUPFAM" id="SSF52540">
    <property type="entry name" value="P-loop containing nucleoside triphosphate hydrolases"/>
    <property type="match status" value="1"/>
</dbReference>
<dbReference type="PROSITE" id="PS00211">
    <property type="entry name" value="ABC_TRANSPORTER_1"/>
    <property type="match status" value="1"/>
</dbReference>
<dbReference type="PROSITE" id="PS50893">
    <property type="entry name" value="ABC_TRANSPORTER_2"/>
    <property type="match status" value="1"/>
</dbReference>
<organism>
    <name type="scientific">Escherichia coli O157:H7</name>
    <dbReference type="NCBI Taxonomy" id="83334"/>
    <lineage>
        <taxon>Bacteria</taxon>
        <taxon>Pseudomonadati</taxon>
        <taxon>Pseudomonadota</taxon>
        <taxon>Gammaproteobacteria</taxon>
        <taxon>Enterobacterales</taxon>
        <taxon>Enterobacteriaceae</taxon>
        <taxon>Escherichia</taxon>
    </lineage>
</organism>
<gene>
    <name type="primary">livG</name>
    <name type="ordered locus">Z4825</name>
    <name type="ordered locus">ECs4302</name>
</gene>
<comment type="function">
    <text evidence="1">Component of the leucine-specific transport system.</text>
</comment>
<comment type="similarity">
    <text evidence="3">Belongs to the ABC transporter superfamily.</text>
</comment>
<sequence length="255" mass="28427">MSQPLLSVNGLMMRFGGLLAVNNVNLELYPQEIVSLIGPNGAGKTTVFNCLTGFYKPTGGTILLRDQHLEGLPGQQIARMGVVRTFQHVRLFREMTVIENLLVAQHQQLKTGLFSGLLKTPSFRRAQSEALDRAATWLERIGLLEHANRQASNLAYGDQRRLEIARCMVTQPEILMLDEPAAGLNPKETKELDELIAELRNHHNTTILLIEHDMKLVMGISDRIYVVNQGTPLANGTPEQIRNNPDVIRAYLGEA</sequence>
<protein>
    <recommendedName>
        <fullName>High-affinity branched-chain amino acid transport ATP-binding protein LivG</fullName>
    </recommendedName>
    <alternativeName>
        <fullName>LIV-I protein G</fullName>
    </alternativeName>
</protein>
<proteinExistence type="inferred from homology"/>
<name>LIVG_ECO57</name>